<sequence length="367" mass="42134">MLLSLVRCSTKRQWAISSTGIRLLSISSPFLSTGSSNSDFLMNLSGSTRSSKHNNLHNNDRTPINKYKSNHGPKKVHSNYQLETKIQPKKMHQSTKFKKFSIKWTTGSERAQKAANEVFQKILGLSPNGVIKALNLETNEIETSSIFQFAKGIDLDRHGFIIANVERTTDHKKIPLVKLIEARVALRRYSDKVADRKQKELIDLGVIKSSKKYDNEKEKVGIKHIRVSWKIKETDLAKQKTNEIQSALKKGHKLCIYLDDKTRTNTDWVDDFTIPAENSNKKISKREKLNRTAILDAVKSLLEEEDTFLSFEGNIENRMLIKSTPKTLSTSKNKEALDEKKVLKEQKKQERREKLRLRTEKKQDTVT</sequence>
<gene>
    <name type="primary">AIM23</name>
    <name type="ORF">Kpol_448p16</name>
</gene>
<protein>
    <recommendedName>
        <fullName>Altered inheritance of mitochondria protein 23, mitochondrial</fullName>
    </recommendedName>
</protein>
<reference key="1">
    <citation type="journal article" date="2007" name="Proc. Natl. Acad. Sci. U.S.A.">
        <title>Independent sorting-out of thousands of duplicated gene pairs in two yeast species descended from a whole-genome duplication.</title>
        <authorList>
            <person name="Scannell D.R."/>
            <person name="Frank A.C."/>
            <person name="Conant G.C."/>
            <person name="Byrne K.P."/>
            <person name="Woolfit M."/>
            <person name="Wolfe K.H."/>
        </authorList>
    </citation>
    <scope>NUCLEOTIDE SEQUENCE [LARGE SCALE GENOMIC DNA]</scope>
    <source>
        <strain>ATCC 22028 / DSM 70294 / BCRC 21397 / CBS 2163 / NBRC 10782 / NRRL Y-8283 / UCD 57-17</strain>
    </source>
</reference>
<organism>
    <name type="scientific">Vanderwaltozyma polyspora (strain ATCC 22028 / DSM 70294 / BCRC 21397 / CBS 2163 / NBRC 10782 / NRRL Y-8283 / UCD 57-17)</name>
    <name type="common">Kluyveromyces polysporus</name>
    <dbReference type="NCBI Taxonomy" id="436907"/>
    <lineage>
        <taxon>Eukaryota</taxon>
        <taxon>Fungi</taxon>
        <taxon>Dikarya</taxon>
        <taxon>Ascomycota</taxon>
        <taxon>Saccharomycotina</taxon>
        <taxon>Saccharomycetes</taxon>
        <taxon>Saccharomycetales</taxon>
        <taxon>Saccharomycetaceae</taxon>
        <taxon>Vanderwaltozyma</taxon>
    </lineage>
</organism>
<comment type="subcellular location">
    <subcellularLocation>
        <location evidence="1">Mitochondrion</location>
    </subcellularLocation>
</comment>
<comment type="similarity">
    <text evidence="4">Belongs to the AIM23 family.</text>
</comment>
<keyword id="KW-0496">Mitochondrion</keyword>
<keyword id="KW-1185">Reference proteome</keyword>
<keyword id="KW-0809">Transit peptide</keyword>
<feature type="transit peptide" description="Mitochondrion" evidence="2">
    <location>
        <begin position="1"/>
        <end position="31"/>
    </location>
</feature>
<feature type="chain" id="PRO_0000399547" description="Altered inheritance of mitochondria protein 23, mitochondrial">
    <location>
        <begin position="32"/>
        <end position="367"/>
    </location>
</feature>
<feature type="region of interest" description="Disordered" evidence="3">
    <location>
        <begin position="326"/>
        <end position="367"/>
    </location>
</feature>
<feature type="compositionally biased region" description="Basic and acidic residues" evidence="3">
    <location>
        <begin position="332"/>
        <end position="367"/>
    </location>
</feature>
<evidence type="ECO:0000250" key="1"/>
<evidence type="ECO:0000255" key="2"/>
<evidence type="ECO:0000256" key="3">
    <source>
        <dbReference type="SAM" id="MobiDB-lite"/>
    </source>
</evidence>
<evidence type="ECO:0000305" key="4"/>
<proteinExistence type="inferred from homology"/>
<name>AIM23_VANPO</name>
<accession>A7TQZ1</accession>
<dbReference type="EMBL" id="DS480466">
    <property type="protein sequence ID" value="EDO15328.1"/>
    <property type="molecule type" value="Genomic_DNA"/>
</dbReference>
<dbReference type="RefSeq" id="XP_001643186.1">
    <property type="nucleotide sequence ID" value="XM_001643136.1"/>
</dbReference>
<dbReference type="SMR" id="A7TQZ1"/>
<dbReference type="FunCoup" id="A7TQZ1">
    <property type="interactions" value="46"/>
</dbReference>
<dbReference type="GeneID" id="5543389"/>
<dbReference type="KEGG" id="vpo:Kpol_448p16"/>
<dbReference type="eggNOG" id="ENOG502RY27">
    <property type="taxonomic scope" value="Eukaryota"/>
</dbReference>
<dbReference type="HOGENOM" id="CLU_057910_0_0_1"/>
<dbReference type="InParanoid" id="A7TQZ1"/>
<dbReference type="OMA" id="KVSWQIS"/>
<dbReference type="OrthoDB" id="3996489at2759"/>
<dbReference type="PhylomeDB" id="A7TQZ1"/>
<dbReference type="Proteomes" id="UP000000267">
    <property type="component" value="Unassembled WGS sequence"/>
</dbReference>
<dbReference type="GO" id="GO:0005739">
    <property type="term" value="C:mitochondrion"/>
    <property type="evidence" value="ECO:0007669"/>
    <property type="project" value="UniProtKB-SubCell"/>
</dbReference>
<dbReference type="GO" id="GO:0097177">
    <property type="term" value="F:mitochondrial ribosome binding"/>
    <property type="evidence" value="ECO:0007669"/>
    <property type="project" value="EnsemblFungi"/>
</dbReference>
<dbReference type="GO" id="GO:0070124">
    <property type="term" value="P:mitochondrial translational initiation"/>
    <property type="evidence" value="ECO:0007669"/>
    <property type="project" value="EnsemblFungi"/>
</dbReference>
<dbReference type="InterPro" id="IPR029427">
    <property type="entry name" value="AIM23"/>
</dbReference>
<dbReference type="Pfam" id="PF14877">
    <property type="entry name" value="mIF3"/>
    <property type="match status" value="1"/>
</dbReference>